<protein>
    <recommendedName>
        <fullName evidence="1">Uridylate kinase</fullName>
        <shortName evidence="1">UK</shortName>
        <ecNumber evidence="1">2.7.4.22</ecNumber>
    </recommendedName>
    <alternativeName>
        <fullName evidence="1">Uridine monophosphate kinase</fullName>
        <shortName evidence="1">UMP kinase</shortName>
        <shortName evidence="1">UMPK</shortName>
    </alternativeName>
</protein>
<accession>Q0VQF5</accession>
<feature type="chain" id="PRO_0000323780" description="Uridylate kinase">
    <location>
        <begin position="1"/>
        <end position="252"/>
    </location>
</feature>
<feature type="region of interest" description="Involved in allosteric activation by GTP" evidence="1">
    <location>
        <begin position="32"/>
        <end position="37"/>
    </location>
</feature>
<feature type="binding site" evidence="1">
    <location>
        <begin position="24"/>
        <end position="27"/>
    </location>
    <ligand>
        <name>ATP</name>
        <dbReference type="ChEBI" id="CHEBI:30616"/>
    </ligand>
</feature>
<feature type="binding site" evidence="1">
    <location>
        <position position="66"/>
    </location>
    <ligand>
        <name>UMP</name>
        <dbReference type="ChEBI" id="CHEBI:57865"/>
    </ligand>
</feature>
<feature type="binding site" evidence="1">
    <location>
        <position position="67"/>
    </location>
    <ligand>
        <name>ATP</name>
        <dbReference type="ChEBI" id="CHEBI:30616"/>
    </ligand>
</feature>
<feature type="binding site" evidence="1">
    <location>
        <position position="71"/>
    </location>
    <ligand>
        <name>ATP</name>
        <dbReference type="ChEBI" id="CHEBI:30616"/>
    </ligand>
</feature>
<feature type="binding site" evidence="1">
    <location>
        <position position="86"/>
    </location>
    <ligand>
        <name>UMP</name>
        <dbReference type="ChEBI" id="CHEBI:57865"/>
    </ligand>
</feature>
<feature type="binding site" evidence="1">
    <location>
        <begin position="147"/>
        <end position="154"/>
    </location>
    <ligand>
        <name>UMP</name>
        <dbReference type="ChEBI" id="CHEBI:57865"/>
    </ligand>
</feature>
<feature type="binding site" evidence="1">
    <location>
        <position position="174"/>
    </location>
    <ligand>
        <name>ATP</name>
        <dbReference type="ChEBI" id="CHEBI:30616"/>
    </ligand>
</feature>
<feature type="binding site" evidence="1">
    <location>
        <position position="180"/>
    </location>
    <ligand>
        <name>ATP</name>
        <dbReference type="ChEBI" id="CHEBI:30616"/>
    </ligand>
</feature>
<feature type="binding site" evidence="1">
    <location>
        <position position="183"/>
    </location>
    <ligand>
        <name>ATP</name>
        <dbReference type="ChEBI" id="CHEBI:30616"/>
    </ligand>
</feature>
<organism>
    <name type="scientific">Alcanivorax borkumensis (strain ATCC 700651 / DSM 11573 / NCIMB 13689 / SK2)</name>
    <dbReference type="NCBI Taxonomy" id="393595"/>
    <lineage>
        <taxon>Bacteria</taxon>
        <taxon>Pseudomonadati</taxon>
        <taxon>Pseudomonadota</taxon>
        <taxon>Gammaproteobacteria</taxon>
        <taxon>Oceanospirillales</taxon>
        <taxon>Alcanivoracaceae</taxon>
        <taxon>Alcanivorax</taxon>
    </lineage>
</organism>
<keyword id="KW-0021">Allosteric enzyme</keyword>
<keyword id="KW-0067">ATP-binding</keyword>
<keyword id="KW-0963">Cytoplasm</keyword>
<keyword id="KW-0418">Kinase</keyword>
<keyword id="KW-0547">Nucleotide-binding</keyword>
<keyword id="KW-0665">Pyrimidine biosynthesis</keyword>
<keyword id="KW-1185">Reference proteome</keyword>
<keyword id="KW-0808">Transferase</keyword>
<name>PYRH_ALCBS</name>
<dbReference type="EC" id="2.7.4.22" evidence="1"/>
<dbReference type="EMBL" id="AM286690">
    <property type="protein sequence ID" value="CAL16593.1"/>
    <property type="molecule type" value="Genomic_DNA"/>
</dbReference>
<dbReference type="SMR" id="Q0VQF5"/>
<dbReference type="STRING" id="393595.ABO_1145"/>
<dbReference type="KEGG" id="abo:ABO_1145"/>
<dbReference type="eggNOG" id="COG0528">
    <property type="taxonomic scope" value="Bacteria"/>
</dbReference>
<dbReference type="HOGENOM" id="CLU_033861_0_0_6"/>
<dbReference type="OrthoDB" id="9807458at2"/>
<dbReference type="UniPathway" id="UPA00159">
    <property type="reaction ID" value="UER00275"/>
</dbReference>
<dbReference type="Proteomes" id="UP000008871">
    <property type="component" value="Chromosome"/>
</dbReference>
<dbReference type="GO" id="GO:0005829">
    <property type="term" value="C:cytosol"/>
    <property type="evidence" value="ECO:0007669"/>
    <property type="project" value="TreeGrafter"/>
</dbReference>
<dbReference type="GO" id="GO:0005524">
    <property type="term" value="F:ATP binding"/>
    <property type="evidence" value="ECO:0007669"/>
    <property type="project" value="UniProtKB-KW"/>
</dbReference>
<dbReference type="GO" id="GO:0033862">
    <property type="term" value="F:UMP kinase activity"/>
    <property type="evidence" value="ECO:0007669"/>
    <property type="project" value="UniProtKB-EC"/>
</dbReference>
<dbReference type="GO" id="GO:0044210">
    <property type="term" value="P:'de novo' CTP biosynthetic process"/>
    <property type="evidence" value="ECO:0007669"/>
    <property type="project" value="UniProtKB-UniRule"/>
</dbReference>
<dbReference type="GO" id="GO:0006225">
    <property type="term" value="P:UDP biosynthetic process"/>
    <property type="evidence" value="ECO:0007669"/>
    <property type="project" value="TreeGrafter"/>
</dbReference>
<dbReference type="CDD" id="cd04254">
    <property type="entry name" value="AAK_UMPK-PyrH-Ec"/>
    <property type="match status" value="1"/>
</dbReference>
<dbReference type="FunFam" id="3.40.1160.10:FF:000001">
    <property type="entry name" value="Uridylate kinase"/>
    <property type="match status" value="1"/>
</dbReference>
<dbReference type="Gene3D" id="3.40.1160.10">
    <property type="entry name" value="Acetylglutamate kinase-like"/>
    <property type="match status" value="1"/>
</dbReference>
<dbReference type="HAMAP" id="MF_01220_B">
    <property type="entry name" value="PyrH_B"/>
    <property type="match status" value="1"/>
</dbReference>
<dbReference type="InterPro" id="IPR036393">
    <property type="entry name" value="AceGlu_kinase-like_sf"/>
</dbReference>
<dbReference type="InterPro" id="IPR001048">
    <property type="entry name" value="Asp/Glu/Uridylate_kinase"/>
</dbReference>
<dbReference type="InterPro" id="IPR011817">
    <property type="entry name" value="Uridylate_kinase"/>
</dbReference>
<dbReference type="InterPro" id="IPR015963">
    <property type="entry name" value="Uridylate_kinase_bac"/>
</dbReference>
<dbReference type="NCBIfam" id="TIGR02075">
    <property type="entry name" value="pyrH_bact"/>
    <property type="match status" value="1"/>
</dbReference>
<dbReference type="PANTHER" id="PTHR42833">
    <property type="entry name" value="URIDYLATE KINASE"/>
    <property type="match status" value="1"/>
</dbReference>
<dbReference type="PANTHER" id="PTHR42833:SF4">
    <property type="entry name" value="URIDYLATE KINASE PUMPKIN, CHLOROPLASTIC"/>
    <property type="match status" value="1"/>
</dbReference>
<dbReference type="Pfam" id="PF00696">
    <property type="entry name" value="AA_kinase"/>
    <property type="match status" value="1"/>
</dbReference>
<dbReference type="PIRSF" id="PIRSF005650">
    <property type="entry name" value="Uridylate_kin"/>
    <property type="match status" value="1"/>
</dbReference>
<dbReference type="SUPFAM" id="SSF53633">
    <property type="entry name" value="Carbamate kinase-like"/>
    <property type="match status" value="1"/>
</dbReference>
<sequence length="252" mass="26984">MSGGEKEMPTNKERSPRYNRILLKLSGEALAGEEGFGIDPKVLDAISLEIGQLVGIGVQVGLVVGGGNLFRGAALQSAGLDRVAGDHMGMLATVMNGLALRDALERSNIRTRLMSAIPMSGVVEHYDHRNANRHLKNGEVVIFCAGTGNPFFTTDSAACLRGIEISADVVLKATKVDGVYNDDPVKNPDAVKYDALTYDEVLEKKLGVMDLTAICLCRDHSMPLRVFDMNKKGALLNLMLGGKEGTLVEAAQ</sequence>
<proteinExistence type="inferred from homology"/>
<gene>
    <name evidence="1" type="primary">pyrH</name>
    <name type="ordered locus">ABO_1145</name>
</gene>
<reference key="1">
    <citation type="journal article" date="2006" name="Nat. Biotechnol.">
        <title>Genome sequence of the ubiquitous hydrocarbon-degrading marine bacterium Alcanivorax borkumensis.</title>
        <authorList>
            <person name="Schneiker S."/>
            <person name="Martins dos Santos V.A.P."/>
            <person name="Bartels D."/>
            <person name="Bekel T."/>
            <person name="Brecht M."/>
            <person name="Buhrmester J."/>
            <person name="Chernikova T.N."/>
            <person name="Denaro R."/>
            <person name="Ferrer M."/>
            <person name="Gertler C."/>
            <person name="Goesmann A."/>
            <person name="Golyshina O.V."/>
            <person name="Kaminski F."/>
            <person name="Khachane A.N."/>
            <person name="Lang S."/>
            <person name="Linke B."/>
            <person name="McHardy A.C."/>
            <person name="Meyer F."/>
            <person name="Nechitaylo T."/>
            <person name="Puehler A."/>
            <person name="Regenhardt D."/>
            <person name="Rupp O."/>
            <person name="Sabirova J.S."/>
            <person name="Selbitschka W."/>
            <person name="Yakimov M.M."/>
            <person name="Timmis K.N."/>
            <person name="Vorhoelter F.-J."/>
            <person name="Weidner S."/>
            <person name="Kaiser O."/>
            <person name="Golyshin P.N."/>
        </authorList>
    </citation>
    <scope>NUCLEOTIDE SEQUENCE [LARGE SCALE GENOMIC DNA]</scope>
    <source>
        <strain>ATCC 700651 / DSM 11573 / NCIMB 13689 / SK2</strain>
    </source>
</reference>
<comment type="function">
    <text evidence="1">Catalyzes the reversible phosphorylation of UMP to UDP.</text>
</comment>
<comment type="catalytic activity">
    <reaction evidence="1">
        <text>UMP + ATP = UDP + ADP</text>
        <dbReference type="Rhea" id="RHEA:24400"/>
        <dbReference type="ChEBI" id="CHEBI:30616"/>
        <dbReference type="ChEBI" id="CHEBI:57865"/>
        <dbReference type="ChEBI" id="CHEBI:58223"/>
        <dbReference type="ChEBI" id="CHEBI:456216"/>
        <dbReference type="EC" id="2.7.4.22"/>
    </reaction>
</comment>
<comment type="activity regulation">
    <text evidence="1">Allosterically activated by GTP. Inhibited by UTP.</text>
</comment>
<comment type="pathway">
    <text evidence="1">Pyrimidine metabolism; CTP biosynthesis via de novo pathway; UDP from UMP (UMPK route): step 1/1.</text>
</comment>
<comment type="subunit">
    <text evidence="1">Homohexamer.</text>
</comment>
<comment type="subcellular location">
    <subcellularLocation>
        <location evidence="1">Cytoplasm</location>
    </subcellularLocation>
</comment>
<comment type="similarity">
    <text evidence="1">Belongs to the UMP kinase family.</text>
</comment>
<evidence type="ECO:0000255" key="1">
    <source>
        <dbReference type="HAMAP-Rule" id="MF_01220"/>
    </source>
</evidence>